<name>HRCA_MYCBT</name>
<organism>
    <name type="scientific">Mycobacterium bovis (strain BCG / Tokyo 172 / ATCC 35737 / TMC 1019)</name>
    <dbReference type="NCBI Taxonomy" id="561275"/>
    <lineage>
        <taxon>Bacteria</taxon>
        <taxon>Bacillati</taxon>
        <taxon>Actinomycetota</taxon>
        <taxon>Actinomycetes</taxon>
        <taxon>Mycobacteriales</taxon>
        <taxon>Mycobacteriaceae</taxon>
        <taxon>Mycobacterium</taxon>
        <taxon>Mycobacterium tuberculosis complex</taxon>
    </lineage>
</organism>
<comment type="function">
    <text evidence="1">Negative regulator of class I heat shock genes (grpE-dnaK-dnaJ and groELS operons). Prevents heat-shock induction of these operons.</text>
</comment>
<comment type="similarity">
    <text evidence="1">Belongs to the HrcA family.</text>
</comment>
<feature type="chain" id="PRO_1000118307" description="Heat-inducible transcription repressor HrcA">
    <location>
        <begin position="1"/>
        <end position="343"/>
    </location>
</feature>
<gene>
    <name evidence="1" type="primary">hrcA</name>
    <name type="ordered locus">JTY_2382</name>
</gene>
<reference key="1">
    <citation type="journal article" date="2009" name="Vaccine">
        <title>Whole genome sequence analysis of Mycobacterium bovis bacillus Calmette-Guerin (BCG) Tokyo 172: a comparative study of BCG vaccine substrains.</title>
        <authorList>
            <person name="Seki M."/>
            <person name="Honda I."/>
            <person name="Fujita I."/>
            <person name="Yano I."/>
            <person name="Yamamoto S."/>
            <person name="Koyama A."/>
        </authorList>
    </citation>
    <scope>NUCLEOTIDE SEQUENCE [LARGE SCALE GENOMIC DNA]</scope>
    <source>
        <strain>BCG / Tokyo 172 / ATCC 35737 / TMC 1019</strain>
    </source>
</reference>
<dbReference type="EMBL" id="AP010918">
    <property type="protein sequence ID" value="BAH26666.1"/>
    <property type="molecule type" value="Genomic_DNA"/>
</dbReference>
<dbReference type="RefSeq" id="WP_003412252.1">
    <property type="nucleotide sequence ID" value="NZ_CP014566.1"/>
</dbReference>
<dbReference type="SMR" id="C1AQT7"/>
<dbReference type="GeneID" id="45426359"/>
<dbReference type="KEGG" id="mbt:JTY_2382"/>
<dbReference type="HOGENOM" id="CLU_050019_2_0_11"/>
<dbReference type="GO" id="GO:0003677">
    <property type="term" value="F:DNA binding"/>
    <property type="evidence" value="ECO:0007669"/>
    <property type="project" value="InterPro"/>
</dbReference>
<dbReference type="GO" id="GO:0045892">
    <property type="term" value="P:negative regulation of DNA-templated transcription"/>
    <property type="evidence" value="ECO:0007669"/>
    <property type="project" value="UniProtKB-UniRule"/>
</dbReference>
<dbReference type="FunFam" id="1.10.10.10:FF:000049">
    <property type="entry name" value="Heat-inducible transcription repressor HrcA"/>
    <property type="match status" value="1"/>
</dbReference>
<dbReference type="FunFam" id="3.30.390.60:FF:000003">
    <property type="entry name" value="Heat-inducible transcription repressor HrcA"/>
    <property type="match status" value="1"/>
</dbReference>
<dbReference type="Gene3D" id="3.30.450.40">
    <property type="match status" value="1"/>
</dbReference>
<dbReference type="Gene3D" id="3.30.390.60">
    <property type="entry name" value="Heat-inducible transcription repressor hrca homolog, domain 3"/>
    <property type="match status" value="1"/>
</dbReference>
<dbReference type="Gene3D" id="1.10.10.10">
    <property type="entry name" value="Winged helix-like DNA-binding domain superfamily/Winged helix DNA-binding domain"/>
    <property type="match status" value="1"/>
</dbReference>
<dbReference type="HAMAP" id="MF_00081">
    <property type="entry name" value="HrcA"/>
    <property type="match status" value="1"/>
</dbReference>
<dbReference type="InterPro" id="IPR029016">
    <property type="entry name" value="GAF-like_dom_sf"/>
</dbReference>
<dbReference type="InterPro" id="IPR002571">
    <property type="entry name" value="HrcA"/>
</dbReference>
<dbReference type="InterPro" id="IPR021153">
    <property type="entry name" value="HrcA_C"/>
</dbReference>
<dbReference type="InterPro" id="IPR036388">
    <property type="entry name" value="WH-like_DNA-bd_sf"/>
</dbReference>
<dbReference type="InterPro" id="IPR036390">
    <property type="entry name" value="WH_DNA-bd_sf"/>
</dbReference>
<dbReference type="InterPro" id="IPR023120">
    <property type="entry name" value="WHTH_transcript_rep_HrcA_IDD"/>
</dbReference>
<dbReference type="NCBIfam" id="TIGR00331">
    <property type="entry name" value="hrcA"/>
    <property type="match status" value="1"/>
</dbReference>
<dbReference type="PANTHER" id="PTHR34824">
    <property type="entry name" value="HEAT-INDUCIBLE TRANSCRIPTION REPRESSOR HRCA"/>
    <property type="match status" value="1"/>
</dbReference>
<dbReference type="PANTHER" id="PTHR34824:SF1">
    <property type="entry name" value="HEAT-INDUCIBLE TRANSCRIPTION REPRESSOR HRCA"/>
    <property type="match status" value="1"/>
</dbReference>
<dbReference type="Pfam" id="PF01628">
    <property type="entry name" value="HrcA"/>
    <property type="match status" value="1"/>
</dbReference>
<dbReference type="PIRSF" id="PIRSF005485">
    <property type="entry name" value="HrcA"/>
    <property type="match status" value="1"/>
</dbReference>
<dbReference type="SUPFAM" id="SSF55781">
    <property type="entry name" value="GAF domain-like"/>
    <property type="match status" value="1"/>
</dbReference>
<dbReference type="SUPFAM" id="SSF46785">
    <property type="entry name" value="Winged helix' DNA-binding domain"/>
    <property type="match status" value="1"/>
</dbReference>
<keyword id="KW-0678">Repressor</keyword>
<keyword id="KW-0346">Stress response</keyword>
<keyword id="KW-0804">Transcription</keyword>
<keyword id="KW-0805">Transcription regulation</keyword>
<proteinExistence type="inferred from homology"/>
<sequence>MGSADERRFEVLRAIVADFVATQEPIGSKSLVERHNLGVSSATVRNDMAVLEAEGYITQPHTSSGRVPTEKGYREFVDRLEDVKPLSSAERRAIQSFLESGVDLDDVLRRAVRLLAQLTRQVAVVQYPTLSTSTVRHLEVIALTPARLLMVVITDSGRVDQRIVELGDVIDDHQLAQLREILGQALEGKKLSAASVAVADLASQLGGAGGLGDAVGRAATVLLESLVEHTEERLLLGGTANLTRNAADFGGSLRSILEALEEQVVVLRLLAAQQEAGKVTVRIGHETASEQMVGTSMVSTAYGTAHTVYGGMGVVGPTRMDYPGTIASVAAVALYIGDVLGAR</sequence>
<protein>
    <recommendedName>
        <fullName evidence="1">Heat-inducible transcription repressor HrcA</fullName>
    </recommendedName>
</protein>
<accession>C1AQT7</accession>
<evidence type="ECO:0000255" key="1">
    <source>
        <dbReference type="HAMAP-Rule" id="MF_00081"/>
    </source>
</evidence>